<name>RNB_SALAR</name>
<reference key="1">
    <citation type="submission" date="2007-11" db="EMBL/GenBank/DDBJ databases">
        <authorList>
            <consortium name="The Salmonella enterica serovar Arizonae Genome Sequencing Project"/>
            <person name="McClelland M."/>
            <person name="Sanderson E.K."/>
            <person name="Porwollik S."/>
            <person name="Spieth J."/>
            <person name="Clifton W.S."/>
            <person name="Fulton R."/>
            <person name="Chunyan W."/>
            <person name="Wollam A."/>
            <person name="Shah N."/>
            <person name="Pepin K."/>
            <person name="Bhonagiri V."/>
            <person name="Nash W."/>
            <person name="Johnson M."/>
            <person name="Thiruvilangam P."/>
            <person name="Wilson R."/>
        </authorList>
    </citation>
    <scope>NUCLEOTIDE SEQUENCE [LARGE SCALE GENOMIC DNA]</scope>
    <source>
        <strain>ATCC BAA-731 / CDC346-86 / RSK2980</strain>
    </source>
</reference>
<keyword id="KW-0963">Cytoplasm</keyword>
<keyword id="KW-0269">Exonuclease</keyword>
<keyword id="KW-0378">Hydrolase</keyword>
<keyword id="KW-0540">Nuclease</keyword>
<keyword id="KW-1185">Reference proteome</keyword>
<keyword id="KW-0694">RNA-binding</keyword>
<organism>
    <name type="scientific">Salmonella arizonae (strain ATCC BAA-731 / CDC346-86 / RSK2980)</name>
    <dbReference type="NCBI Taxonomy" id="41514"/>
    <lineage>
        <taxon>Bacteria</taxon>
        <taxon>Pseudomonadati</taxon>
        <taxon>Pseudomonadota</taxon>
        <taxon>Gammaproteobacteria</taxon>
        <taxon>Enterobacterales</taxon>
        <taxon>Enterobacteriaceae</taxon>
        <taxon>Salmonella</taxon>
    </lineage>
</organism>
<dbReference type="EC" id="3.1.13.1" evidence="2"/>
<dbReference type="EMBL" id="CP000880">
    <property type="protein sequence ID" value="ABX21164.1"/>
    <property type="molecule type" value="Genomic_DNA"/>
</dbReference>
<dbReference type="SMR" id="A9MQ20"/>
<dbReference type="STRING" id="41514.SARI_01262"/>
<dbReference type="KEGG" id="ses:SARI_01262"/>
<dbReference type="HOGENOM" id="CLU_002333_7_3_6"/>
<dbReference type="Proteomes" id="UP000002084">
    <property type="component" value="Chromosome"/>
</dbReference>
<dbReference type="GO" id="GO:0005829">
    <property type="term" value="C:cytosol"/>
    <property type="evidence" value="ECO:0007669"/>
    <property type="project" value="UniProtKB-ARBA"/>
</dbReference>
<dbReference type="GO" id="GO:0008859">
    <property type="term" value="F:exoribonuclease II activity"/>
    <property type="evidence" value="ECO:0007669"/>
    <property type="project" value="UniProtKB-UniRule"/>
</dbReference>
<dbReference type="GO" id="GO:0003723">
    <property type="term" value="F:RNA binding"/>
    <property type="evidence" value="ECO:0007669"/>
    <property type="project" value="UniProtKB-KW"/>
</dbReference>
<dbReference type="GO" id="GO:0006402">
    <property type="term" value="P:mRNA catabolic process"/>
    <property type="evidence" value="ECO:0007669"/>
    <property type="project" value="UniProtKB-UniRule"/>
</dbReference>
<dbReference type="FunFam" id="2.40.50.140:FF:000079">
    <property type="entry name" value="Exoribonuclease 2"/>
    <property type="match status" value="1"/>
</dbReference>
<dbReference type="FunFam" id="2.40.50.140:FF:000081">
    <property type="entry name" value="Exoribonuclease 2"/>
    <property type="match status" value="1"/>
</dbReference>
<dbReference type="FunFam" id="2.40.50.640:FF:000001">
    <property type="entry name" value="Exoribonuclease 2"/>
    <property type="match status" value="1"/>
</dbReference>
<dbReference type="Gene3D" id="2.40.50.640">
    <property type="match status" value="1"/>
</dbReference>
<dbReference type="Gene3D" id="2.40.50.140">
    <property type="entry name" value="Nucleic acid-binding proteins"/>
    <property type="match status" value="2"/>
</dbReference>
<dbReference type="HAMAP" id="MF_01036">
    <property type="entry name" value="RNase_II"/>
    <property type="match status" value="1"/>
</dbReference>
<dbReference type="InterPro" id="IPR011129">
    <property type="entry name" value="CSD"/>
</dbReference>
<dbReference type="InterPro" id="IPR012340">
    <property type="entry name" value="NA-bd_OB-fold"/>
</dbReference>
<dbReference type="InterPro" id="IPR013223">
    <property type="entry name" value="RNase_B_OB_dom"/>
</dbReference>
<dbReference type="InterPro" id="IPR011804">
    <property type="entry name" value="RNase_II"/>
</dbReference>
<dbReference type="InterPro" id="IPR001900">
    <property type="entry name" value="RNase_II/R"/>
</dbReference>
<dbReference type="InterPro" id="IPR022966">
    <property type="entry name" value="RNase_II/R_CS"/>
</dbReference>
<dbReference type="InterPro" id="IPR004476">
    <property type="entry name" value="RNase_II/RNase_R"/>
</dbReference>
<dbReference type="InterPro" id="IPR050180">
    <property type="entry name" value="RNR_Ribonuclease"/>
</dbReference>
<dbReference type="InterPro" id="IPR003029">
    <property type="entry name" value="S1_domain"/>
</dbReference>
<dbReference type="NCBIfam" id="TIGR00358">
    <property type="entry name" value="3_prime_RNase"/>
    <property type="match status" value="1"/>
</dbReference>
<dbReference type="NCBIfam" id="NF003455">
    <property type="entry name" value="PRK05054.1"/>
    <property type="match status" value="1"/>
</dbReference>
<dbReference type="NCBIfam" id="TIGR02062">
    <property type="entry name" value="RNase_B"/>
    <property type="match status" value="1"/>
</dbReference>
<dbReference type="PANTHER" id="PTHR23355:SF37">
    <property type="entry name" value="EXORIBONUCLEASE 2"/>
    <property type="match status" value="1"/>
</dbReference>
<dbReference type="PANTHER" id="PTHR23355">
    <property type="entry name" value="RIBONUCLEASE"/>
    <property type="match status" value="1"/>
</dbReference>
<dbReference type="Pfam" id="PF08206">
    <property type="entry name" value="OB_RNB"/>
    <property type="match status" value="1"/>
</dbReference>
<dbReference type="Pfam" id="PF00773">
    <property type="entry name" value="RNB"/>
    <property type="match status" value="1"/>
</dbReference>
<dbReference type="Pfam" id="PF00575">
    <property type="entry name" value="S1"/>
    <property type="match status" value="1"/>
</dbReference>
<dbReference type="SMART" id="SM00357">
    <property type="entry name" value="CSP"/>
    <property type="match status" value="1"/>
</dbReference>
<dbReference type="SMART" id="SM00955">
    <property type="entry name" value="RNB"/>
    <property type="match status" value="1"/>
</dbReference>
<dbReference type="SUPFAM" id="SSF50249">
    <property type="entry name" value="Nucleic acid-binding proteins"/>
    <property type="match status" value="4"/>
</dbReference>
<dbReference type="PROSITE" id="PS01175">
    <property type="entry name" value="RIBONUCLEASE_II"/>
    <property type="match status" value="1"/>
</dbReference>
<protein>
    <recommendedName>
        <fullName evidence="2">Exoribonuclease 2</fullName>
        <ecNumber evidence="2">3.1.13.1</ecNumber>
    </recommendedName>
    <alternativeName>
        <fullName evidence="2">Exoribonuclease II</fullName>
        <shortName evidence="2">RNase II</shortName>
        <shortName evidence="2">Ribonuclease II</shortName>
    </alternativeName>
</protein>
<evidence type="ECO:0000255" key="1"/>
<evidence type="ECO:0000255" key="2">
    <source>
        <dbReference type="HAMAP-Rule" id="MF_01036"/>
    </source>
</evidence>
<proteinExistence type="inferred from homology"/>
<gene>
    <name evidence="2" type="primary">rnb</name>
    <name type="ordered locus">SARI_01262</name>
</gene>
<feature type="chain" id="PRO_1000084280" description="Exoribonuclease 2">
    <location>
        <begin position="1"/>
        <end position="644"/>
    </location>
</feature>
<feature type="domain" description="RNB" evidence="1">
    <location>
        <begin position="189"/>
        <end position="516"/>
    </location>
</feature>
<feature type="domain" description="S1 motif" evidence="2">
    <location>
        <begin position="561"/>
        <end position="643"/>
    </location>
</feature>
<sequence>MFQDNPLLAQLKQQLHSQTPRAEGVVKATEKGFGFLEVDAQKSYFIPPPQMKKVMHGDRIVAVIHTEKERESAEPEALIEPFLTRFVGKIQGKNDRLTIVPDHPMLKDAIPCRAARGVQHEFKEGDWAVAEMRRHPLKGDRSFYADLTQYITFADDHFAPWWVTLARHNLEKEAPNGVATEMLDEGLERQDLTALNFVTIDSASTEDMDDALYAEELADGRLQLTVAIADPTAWIAEGSKLDNAAKIRAFTNYLPGFNIPMLPRELSDDLCSLRANEVRPTLTCRMIIAADGSIDDDIAFFAATIESKAKLAYDNVSDWLENSGTWQPDNEGIAQQIRLLHRICLSRGEWRHHHALVFKDRPDYRFVLGEKGEVLDIVAEPRRIANRIVEESMIAANLCAARVLRDKLGFGIYNVHTGFDPANADALAALLKTHGLHVDAEEVLTLEGFCKLRRELDAQPSGFLDSRIRRFQSFAEISTEPGPHFGLGLEAYATWTSPIRKYGDMINHRLLKAVIKGETIARPREDITQQMAERRRLNRMAERDVGDWLYARFLNDKAGTDTRFAAEIIDVSRGGMRVRLVDNGAVAFIPASFLHAVRDELVCSQENGTIQIKGETVYKVTDVIDVTIAEVRMDTRSIIARPAA</sequence>
<comment type="function">
    <text evidence="2">Involved in mRNA degradation. Hydrolyzes single-stranded polyribonucleotides processively in the 3' to 5' direction.</text>
</comment>
<comment type="catalytic activity">
    <reaction evidence="2">
        <text>Exonucleolytic cleavage in the 3'- to 5'-direction to yield nucleoside 5'-phosphates.</text>
        <dbReference type="EC" id="3.1.13.1"/>
    </reaction>
</comment>
<comment type="subcellular location">
    <subcellularLocation>
        <location evidence="2">Cytoplasm</location>
    </subcellularLocation>
</comment>
<comment type="similarity">
    <text evidence="2">Belongs to the RNR ribonuclease family. RNase II subfamily.</text>
</comment>
<accession>A9MQ20</accession>